<evidence type="ECO:0000255" key="1">
    <source>
        <dbReference type="HAMAP-Rule" id="MF_01848"/>
    </source>
</evidence>
<evidence type="ECO:0000256" key="2">
    <source>
        <dbReference type="SAM" id="MobiDB-lite"/>
    </source>
</evidence>
<feature type="chain" id="PRO_1000216113" description="Ribosomal RNA large subunit methyltransferase F">
    <location>
        <begin position="1"/>
        <end position="339"/>
    </location>
</feature>
<feature type="region of interest" description="Disordered" evidence="2">
    <location>
        <begin position="1"/>
        <end position="26"/>
    </location>
</feature>
<accession>C3K6G1</accession>
<dbReference type="EC" id="2.1.1.181" evidence="1"/>
<dbReference type="EMBL" id="AM181176">
    <property type="protein sequence ID" value="CAY47315.1"/>
    <property type="molecule type" value="Genomic_DNA"/>
</dbReference>
<dbReference type="RefSeq" id="WP_012722393.1">
    <property type="nucleotide sequence ID" value="NC_012660.1"/>
</dbReference>
<dbReference type="SMR" id="C3K6G1"/>
<dbReference type="STRING" id="294.SRM1_01029"/>
<dbReference type="PATRIC" id="fig|216595.4.peg.1285"/>
<dbReference type="eggNOG" id="COG3129">
    <property type="taxonomic scope" value="Bacteria"/>
</dbReference>
<dbReference type="HOGENOM" id="CLU_027534_3_0_6"/>
<dbReference type="OrthoDB" id="1115728at2"/>
<dbReference type="GO" id="GO:0005737">
    <property type="term" value="C:cytoplasm"/>
    <property type="evidence" value="ECO:0007669"/>
    <property type="project" value="UniProtKB-SubCell"/>
</dbReference>
<dbReference type="GO" id="GO:0052907">
    <property type="term" value="F:23S rRNA (adenine(1618)-N(6))-methyltransferase activity"/>
    <property type="evidence" value="ECO:0007669"/>
    <property type="project" value="UniProtKB-EC"/>
</dbReference>
<dbReference type="GO" id="GO:0070475">
    <property type="term" value="P:rRNA base methylation"/>
    <property type="evidence" value="ECO:0007669"/>
    <property type="project" value="TreeGrafter"/>
</dbReference>
<dbReference type="Gene3D" id="3.40.50.150">
    <property type="entry name" value="Vaccinia Virus protein VP39"/>
    <property type="match status" value="1"/>
</dbReference>
<dbReference type="HAMAP" id="MF_01848">
    <property type="entry name" value="23SrRNA_methyltr_F"/>
    <property type="match status" value="1"/>
</dbReference>
<dbReference type="InterPro" id="IPR010286">
    <property type="entry name" value="METTL16/RlmF"/>
</dbReference>
<dbReference type="InterPro" id="IPR016909">
    <property type="entry name" value="rRNA_lsu_MeTfrase_F"/>
</dbReference>
<dbReference type="InterPro" id="IPR029063">
    <property type="entry name" value="SAM-dependent_MTases_sf"/>
</dbReference>
<dbReference type="NCBIfam" id="NF008725">
    <property type="entry name" value="PRK11727.1"/>
    <property type="match status" value="1"/>
</dbReference>
<dbReference type="PANTHER" id="PTHR13393:SF0">
    <property type="entry name" value="RNA N6-ADENOSINE-METHYLTRANSFERASE METTL16"/>
    <property type="match status" value="1"/>
</dbReference>
<dbReference type="PANTHER" id="PTHR13393">
    <property type="entry name" value="SAM-DEPENDENT METHYLTRANSFERASE"/>
    <property type="match status" value="1"/>
</dbReference>
<dbReference type="Pfam" id="PF05971">
    <property type="entry name" value="Methyltransf_10"/>
    <property type="match status" value="1"/>
</dbReference>
<dbReference type="PIRSF" id="PIRSF029038">
    <property type="entry name" value="Mtase_YbiN_prd"/>
    <property type="match status" value="1"/>
</dbReference>
<dbReference type="SUPFAM" id="SSF53335">
    <property type="entry name" value="S-adenosyl-L-methionine-dependent methyltransferases"/>
    <property type="match status" value="1"/>
</dbReference>
<comment type="function">
    <text evidence="1">Specifically methylates the adenine in position 1618 of 23S rRNA.</text>
</comment>
<comment type="catalytic activity">
    <reaction evidence="1">
        <text>adenosine(1618) in 23S rRNA + S-adenosyl-L-methionine = N(6)-methyladenosine(1618) in 23S rRNA + S-adenosyl-L-homocysteine + H(+)</text>
        <dbReference type="Rhea" id="RHEA:16497"/>
        <dbReference type="Rhea" id="RHEA-COMP:10229"/>
        <dbReference type="Rhea" id="RHEA-COMP:10231"/>
        <dbReference type="ChEBI" id="CHEBI:15378"/>
        <dbReference type="ChEBI" id="CHEBI:57856"/>
        <dbReference type="ChEBI" id="CHEBI:59789"/>
        <dbReference type="ChEBI" id="CHEBI:74411"/>
        <dbReference type="ChEBI" id="CHEBI:74449"/>
        <dbReference type="EC" id="2.1.1.181"/>
    </reaction>
</comment>
<comment type="subcellular location">
    <subcellularLocation>
        <location evidence="1">Cytoplasm</location>
    </subcellularLocation>
</comment>
<comment type="similarity">
    <text evidence="1">Belongs to the methyltransferase superfamily. METTL16/RlmF family.</text>
</comment>
<proteinExistence type="inferred from homology"/>
<gene>
    <name evidence="1" type="primary">rlmF</name>
    <name type="ordered locus">PFLU_1051</name>
</gene>
<keyword id="KW-0963">Cytoplasm</keyword>
<keyword id="KW-0489">Methyltransferase</keyword>
<keyword id="KW-0698">rRNA processing</keyword>
<keyword id="KW-0949">S-adenosyl-L-methionine</keyword>
<keyword id="KW-0808">Transferase</keyword>
<name>RLMF_PSEFS</name>
<protein>
    <recommendedName>
        <fullName evidence="1">Ribosomal RNA large subunit methyltransferase F</fullName>
        <ecNumber evidence="1">2.1.1.181</ecNumber>
    </recommendedName>
    <alternativeName>
        <fullName evidence="1">23S rRNA mA1618 methyltransferase</fullName>
    </alternativeName>
    <alternativeName>
        <fullName evidence="1">rRNA adenine N-6-methyltransferase</fullName>
    </alternativeName>
</protein>
<sequence>MTAPSTPKPQRKKPKTATTAKPVVPRKEATLHPRNRHTGRYDFQALIKTTPELAQFVIINPYGKESIDFASPDAVRVFNRALLKSFYGIQHWDIPADYLCPPVPGRADYVHFLADLLASVNDGKIPRGSIVKVLDIGMGANCVYPLIGYMEYRWNFLGSEVDPIAVAAAKAIVQSNDLSKVIQLRQQTNPKQILLSLLEPGERFDLTMCNPPFHASMDEATKGSERKWRALGKADPKRKLPVLNFGGQSAELWCEGGEARFVTQLIAESAHFAHKVLWFSTLVSKASNLPAIETALKKAGVLESQVVEMSQGQKQSRFVAWTFQTKNEQQIWRQRWVRD</sequence>
<reference key="1">
    <citation type="journal article" date="2009" name="Genome Biol.">
        <title>Genomic and genetic analyses of diversity and plant interactions of Pseudomonas fluorescens.</title>
        <authorList>
            <person name="Silby M.W."/>
            <person name="Cerdeno-Tarraga A.M."/>
            <person name="Vernikos G.S."/>
            <person name="Giddens S.R."/>
            <person name="Jackson R.W."/>
            <person name="Preston G.M."/>
            <person name="Zhang X.-X."/>
            <person name="Moon C.D."/>
            <person name="Gehrig S.M."/>
            <person name="Godfrey S.A.C."/>
            <person name="Knight C.G."/>
            <person name="Malone J.G."/>
            <person name="Robinson Z."/>
            <person name="Spiers A.J."/>
            <person name="Harris S."/>
            <person name="Challis G.L."/>
            <person name="Yaxley A.M."/>
            <person name="Harris D."/>
            <person name="Seeger K."/>
            <person name="Murphy L."/>
            <person name="Rutter S."/>
            <person name="Squares R."/>
            <person name="Quail M.A."/>
            <person name="Saunders E."/>
            <person name="Mavromatis K."/>
            <person name="Brettin T.S."/>
            <person name="Bentley S.D."/>
            <person name="Hothersall J."/>
            <person name="Stephens E."/>
            <person name="Thomas C.M."/>
            <person name="Parkhill J."/>
            <person name="Levy S.B."/>
            <person name="Rainey P.B."/>
            <person name="Thomson N.R."/>
        </authorList>
    </citation>
    <scope>NUCLEOTIDE SEQUENCE [LARGE SCALE GENOMIC DNA]</scope>
    <source>
        <strain>SBW25</strain>
    </source>
</reference>
<organism>
    <name type="scientific">Pseudomonas fluorescens (strain SBW25)</name>
    <dbReference type="NCBI Taxonomy" id="216595"/>
    <lineage>
        <taxon>Bacteria</taxon>
        <taxon>Pseudomonadati</taxon>
        <taxon>Pseudomonadota</taxon>
        <taxon>Gammaproteobacteria</taxon>
        <taxon>Pseudomonadales</taxon>
        <taxon>Pseudomonadaceae</taxon>
        <taxon>Pseudomonas</taxon>
    </lineage>
</organism>